<gene>
    <name type="primary">URA3</name>
</gene>
<protein>
    <recommendedName>
        <fullName>Orotidine 5'-phosphate decarboxylase</fullName>
        <ecNumber>4.1.1.23</ecNumber>
    </recommendedName>
    <alternativeName>
        <fullName>OMP decarboxylase</fullName>
        <shortName>OMPDCase</shortName>
        <shortName>OMPdecase</shortName>
    </alternativeName>
    <alternativeName>
        <fullName>Uridine 5'-monophosphate synthase</fullName>
        <shortName>UMP synthase</shortName>
    </alternativeName>
</protein>
<keyword id="KW-0210">Decarboxylase</keyword>
<keyword id="KW-0456">Lyase</keyword>
<keyword id="KW-0665">Pyrimidine biosynthesis</keyword>
<reference key="1">
    <citation type="journal article" date="2002" name="Yeast">
        <title>Isolation and characterization of the gene URA3 encoding the orotidine 5'-phosphate decarboxylase from Torulaspora delbrueckii.</title>
        <authorList>
            <person name="Hernandez-Lopez M.J."/>
            <person name="Prieto J.A."/>
            <person name="Randez-Gil F."/>
        </authorList>
    </citation>
    <scope>NUCLEOTIDE SEQUENCE [GENOMIC DNA]</scope>
    <source>
        <strain>IGC 5321</strain>
    </source>
</reference>
<comment type="catalytic activity">
    <reaction evidence="2">
        <text>orotidine 5'-phosphate + H(+) = UMP + CO2</text>
        <dbReference type="Rhea" id="RHEA:11596"/>
        <dbReference type="ChEBI" id="CHEBI:15378"/>
        <dbReference type="ChEBI" id="CHEBI:16526"/>
        <dbReference type="ChEBI" id="CHEBI:57538"/>
        <dbReference type="ChEBI" id="CHEBI:57865"/>
        <dbReference type="EC" id="4.1.1.23"/>
    </reaction>
</comment>
<comment type="pathway">
    <text>Pyrimidine metabolism; UMP biosynthesis via de novo pathway; UMP from orotate: step 2/2.</text>
</comment>
<comment type="similarity">
    <text evidence="3">Belongs to the OMP decarboxylase family.</text>
</comment>
<dbReference type="EC" id="4.1.1.23"/>
<dbReference type="EMBL" id="AF518402">
    <property type="protein sequence ID" value="AAN71840.1"/>
    <property type="molecule type" value="Genomic_DNA"/>
</dbReference>
<dbReference type="SMR" id="Q8J0E6"/>
<dbReference type="UniPathway" id="UPA00070">
    <property type="reaction ID" value="UER00120"/>
</dbReference>
<dbReference type="GO" id="GO:0005829">
    <property type="term" value="C:cytosol"/>
    <property type="evidence" value="ECO:0007669"/>
    <property type="project" value="TreeGrafter"/>
</dbReference>
<dbReference type="GO" id="GO:0004590">
    <property type="term" value="F:orotidine-5'-phosphate decarboxylase activity"/>
    <property type="evidence" value="ECO:0007669"/>
    <property type="project" value="UniProtKB-EC"/>
</dbReference>
<dbReference type="GO" id="GO:0006207">
    <property type="term" value="P:'de novo' pyrimidine nucleobase biosynthetic process"/>
    <property type="evidence" value="ECO:0007669"/>
    <property type="project" value="InterPro"/>
</dbReference>
<dbReference type="GO" id="GO:0044205">
    <property type="term" value="P:'de novo' UMP biosynthetic process"/>
    <property type="evidence" value="ECO:0007669"/>
    <property type="project" value="UniProtKB-UniPathway"/>
</dbReference>
<dbReference type="CDD" id="cd04725">
    <property type="entry name" value="OMP_decarboxylase_like"/>
    <property type="match status" value="1"/>
</dbReference>
<dbReference type="FunFam" id="3.20.20.70:FF:000114">
    <property type="entry name" value="Decarboxylase,orotidine phosphate"/>
    <property type="match status" value="1"/>
</dbReference>
<dbReference type="Gene3D" id="3.20.20.70">
    <property type="entry name" value="Aldolase class I"/>
    <property type="match status" value="1"/>
</dbReference>
<dbReference type="InterPro" id="IPR013785">
    <property type="entry name" value="Aldolase_TIM"/>
</dbReference>
<dbReference type="InterPro" id="IPR014732">
    <property type="entry name" value="OMPdecase"/>
</dbReference>
<dbReference type="InterPro" id="IPR018089">
    <property type="entry name" value="OMPdecase_AS"/>
</dbReference>
<dbReference type="InterPro" id="IPR001754">
    <property type="entry name" value="OMPdeCOase_dom"/>
</dbReference>
<dbReference type="InterPro" id="IPR011060">
    <property type="entry name" value="RibuloseP-bd_barrel"/>
</dbReference>
<dbReference type="NCBIfam" id="TIGR01740">
    <property type="entry name" value="pyrF"/>
    <property type="match status" value="1"/>
</dbReference>
<dbReference type="PANTHER" id="PTHR32119">
    <property type="entry name" value="OROTIDINE 5'-PHOSPHATE DECARBOXYLASE"/>
    <property type="match status" value="1"/>
</dbReference>
<dbReference type="PANTHER" id="PTHR32119:SF2">
    <property type="entry name" value="OROTIDINE 5'-PHOSPHATE DECARBOXYLASE"/>
    <property type="match status" value="1"/>
</dbReference>
<dbReference type="Pfam" id="PF00215">
    <property type="entry name" value="OMPdecase"/>
    <property type="match status" value="1"/>
</dbReference>
<dbReference type="SMART" id="SM00934">
    <property type="entry name" value="OMPdecase"/>
    <property type="match status" value="1"/>
</dbReference>
<dbReference type="SUPFAM" id="SSF51366">
    <property type="entry name" value="Ribulose-phoshate binding barrel"/>
    <property type="match status" value="1"/>
</dbReference>
<dbReference type="PROSITE" id="PS00156">
    <property type="entry name" value="OMPDECASE"/>
    <property type="match status" value="1"/>
</dbReference>
<organism>
    <name type="scientific">Torulaspora delbrueckii</name>
    <name type="common">Yeast</name>
    <name type="synonym">Candida colliculosa</name>
    <dbReference type="NCBI Taxonomy" id="4950"/>
    <lineage>
        <taxon>Eukaryota</taxon>
        <taxon>Fungi</taxon>
        <taxon>Dikarya</taxon>
        <taxon>Ascomycota</taxon>
        <taxon>Saccharomycotina</taxon>
        <taxon>Saccharomycetes</taxon>
        <taxon>Saccharomycetales</taxon>
        <taxon>Saccharomycetaceae</taxon>
        <taxon>Torulaspora</taxon>
    </lineage>
</organism>
<evidence type="ECO:0000250" key="1"/>
<evidence type="ECO:0000255" key="2">
    <source>
        <dbReference type="PROSITE-ProRule" id="PRU10110"/>
    </source>
</evidence>
<evidence type="ECO:0000305" key="3"/>
<accession>Q8J0E6</accession>
<sequence length="264" mass="29099">MSVATYQERAAKHPSPVASKLLNLMHEKKTNLCASLDVNTTEELLKLVDTLGPYICLLKTHIDIISDFSIDGTVKPLKELAKKHNFMIFEDRKFADIGNTVKLQYSSGVYRIAEWADITNAHGVTGAGIVTGLKQAAQETTNEPRGLLMLAELSSKGSLAHGEYTQGTVEIAKTDKDFVIGFIAQRDMGGREEGYDWLIMTPGVGLDDKGDALGQQYRTVDEVVSTGSDIIIVGRGLFAKGRDPRVEGERYRKAGWEAYEKRCQ</sequence>
<feature type="chain" id="PRO_0000134686" description="Orotidine 5'-phosphate decarboxylase">
    <location>
        <begin position="1"/>
        <end position="264"/>
    </location>
</feature>
<feature type="active site" description="Proton donor" evidence="2">
    <location>
        <position position="93"/>
    </location>
</feature>
<feature type="binding site" evidence="1">
    <location>
        <position position="37"/>
    </location>
    <ligand>
        <name>substrate</name>
    </ligand>
</feature>
<feature type="binding site" evidence="1">
    <location>
        <begin position="59"/>
        <end position="61"/>
    </location>
    <ligand>
        <name>substrate</name>
    </ligand>
</feature>
<feature type="binding site" evidence="1">
    <location>
        <begin position="91"/>
        <end position="100"/>
    </location>
    <ligand>
        <name>substrate</name>
    </ligand>
</feature>
<feature type="binding site" evidence="1">
    <location>
        <position position="217"/>
    </location>
    <ligand>
        <name>substrate</name>
    </ligand>
</feature>
<feature type="binding site" evidence="1">
    <location>
        <position position="235"/>
    </location>
    <ligand>
        <name>substrate</name>
    </ligand>
</feature>
<name>PYRF_TORDE</name>
<proteinExistence type="inferred from homology"/>